<keyword id="KW-0067">ATP-binding</keyword>
<keyword id="KW-0963">Cytoplasm</keyword>
<keyword id="KW-0237">DNA synthesis</keyword>
<keyword id="KW-0418">Kinase</keyword>
<keyword id="KW-0479">Metal-binding</keyword>
<keyword id="KW-0547">Nucleotide-binding</keyword>
<keyword id="KW-1185">Reference proteome</keyword>
<keyword id="KW-0808">Transferase</keyword>
<keyword id="KW-0862">Zinc</keyword>
<evidence type="ECO:0000255" key="1">
    <source>
        <dbReference type="HAMAP-Rule" id="MF_00124"/>
    </source>
</evidence>
<dbReference type="EC" id="2.7.1.21" evidence="1"/>
<dbReference type="EMBL" id="AJ313087">
    <property type="protein sequence ID" value="CAC85214.1"/>
    <property type="molecule type" value="Genomic_DNA"/>
</dbReference>
<dbReference type="EMBL" id="BX293980">
    <property type="protein sequence ID" value="CAE76794.1"/>
    <property type="molecule type" value="Genomic_DNA"/>
</dbReference>
<dbReference type="RefSeq" id="NP_975152.1">
    <property type="nucleotide sequence ID" value="NC_005364.2"/>
</dbReference>
<dbReference type="RefSeq" id="WP_011166351.1">
    <property type="nucleotide sequence ID" value="NC_005364.2"/>
</dbReference>
<dbReference type="SMR" id="Q8VVL0"/>
<dbReference type="STRING" id="272632.MSC_0149"/>
<dbReference type="KEGG" id="mmy:MSC_0149"/>
<dbReference type="PATRIC" id="fig|272632.4.peg.158"/>
<dbReference type="eggNOG" id="COG1435">
    <property type="taxonomic scope" value="Bacteria"/>
</dbReference>
<dbReference type="HOGENOM" id="CLU_064400_3_0_14"/>
<dbReference type="Proteomes" id="UP000001016">
    <property type="component" value="Chromosome"/>
</dbReference>
<dbReference type="GO" id="GO:0005829">
    <property type="term" value="C:cytosol"/>
    <property type="evidence" value="ECO:0007669"/>
    <property type="project" value="TreeGrafter"/>
</dbReference>
<dbReference type="GO" id="GO:0005524">
    <property type="term" value="F:ATP binding"/>
    <property type="evidence" value="ECO:0007669"/>
    <property type="project" value="UniProtKB-UniRule"/>
</dbReference>
<dbReference type="GO" id="GO:0004797">
    <property type="term" value="F:thymidine kinase activity"/>
    <property type="evidence" value="ECO:0007669"/>
    <property type="project" value="UniProtKB-UniRule"/>
</dbReference>
<dbReference type="GO" id="GO:0008270">
    <property type="term" value="F:zinc ion binding"/>
    <property type="evidence" value="ECO:0007669"/>
    <property type="project" value="UniProtKB-UniRule"/>
</dbReference>
<dbReference type="GO" id="GO:0071897">
    <property type="term" value="P:DNA biosynthetic process"/>
    <property type="evidence" value="ECO:0007669"/>
    <property type="project" value="UniProtKB-KW"/>
</dbReference>
<dbReference type="GO" id="GO:0046104">
    <property type="term" value="P:thymidine metabolic process"/>
    <property type="evidence" value="ECO:0007669"/>
    <property type="project" value="TreeGrafter"/>
</dbReference>
<dbReference type="Gene3D" id="3.30.60.20">
    <property type="match status" value="1"/>
</dbReference>
<dbReference type="Gene3D" id="3.40.50.300">
    <property type="entry name" value="P-loop containing nucleotide triphosphate hydrolases"/>
    <property type="match status" value="1"/>
</dbReference>
<dbReference type="HAMAP" id="MF_00124">
    <property type="entry name" value="Thymidine_kinase"/>
    <property type="match status" value="1"/>
</dbReference>
<dbReference type="InterPro" id="IPR027417">
    <property type="entry name" value="P-loop_NTPase"/>
</dbReference>
<dbReference type="InterPro" id="IPR001267">
    <property type="entry name" value="Thymidine_kinase"/>
</dbReference>
<dbReference type="InterPro" id="IPR020633">
    <property type="entry name" value="Thymidine_kinase_CS"/>
</dbReference>
<dbReference type="NCBIfam" id="NF003296">
    <property type="entry name" value="PRK04296.1-1"/>
    <property type="match status" value="1"/>
</dbReference>
<dbReference type="PANTHER" id="PTHR11441">
    <property type="entry name" value="THYMIDINE KINASE"/>
    <property type="match status" value="1"/>
</dbReference>
<dbReference type="PANTHER" id="PTHR11441:SF0">
    <property type="entry name" value="THYMIDINE KINASE, CYTOSOLIC"/>
    <property type="match status" value="1"/>
</dbReference>
<dbReference type="Pfam" id="PF00265">
    <property type="entry name" value="TK"/>
    <property type="match status" value="1"/>
</dbReference>
<dbReference type="PIRSF" id="PIRSF035805">
    <property type="entry name" value="TK_cell"/>
    <property type="match status" value="1"/>
</dbReference>
<dbReference type="SUPFAM" id="SSF57716">
    <property type="entry name" value="Glucocorticoid receptor-like (DNA-binding domain)"/>
    <property type="match status" value="1"/>
</dbReference>
<dbReference type="SUPFAM" id="SSF52540">
    <property type="entry name" value="P-loop containing nucleoside triphosphate hydrolases"/>
    <property type="match status" value="1"/>
</dbReference>
<dbReference type="PROSITE" id="PS00603">
    <property type="entry name" value="TK_CELLULAR_TYPE"/>
    <property type="match status" value="1"/>
</dbReference>
<name>KITH_MYCMS</name>
<feature type="chain" id="PRO_0000174997" description="Thymidine kinase">
    <location>
        <begin position="1"/>
        <end position="209"/>
    </location>
</feature>
<feature type="active site" description="Proton acceptor" evidence="1">
    <location>
        <position position="104"/>
    </location>
</feature>
<feature type="binding site" evidence="1">
    <location>
        <begin position="25"/>
        <end position="32"/>
    </location>
    <ligand>
        <name>ATP</name>
        <dbReference type="ChEBI" id="CHEBI:30616"/>
    </ligand>
</feature>
<feature type="binding site" evidence="1">
    <location>
        <begin position="103"/>
        <end position="106"/>
    </location>
    <ligand>
        <name>ATP</name>
        <dbReference type="ChEBI" id="CHEBI:30616"/>
    </ligand>
</feature>
<feature type="binding site" evidence="1">
    <location>
        <position position="160"/>
    </location>
    <ligand>
        <name>Zn(2+)</name>
        <dbReference type="ChEBI" id="CHEBI:29105"/>
    </ligand>
</feature>
<feature type="binding site" evidence="1">
    <location>
        <position position="163"/>
    </location>
    <ligand>
        <name>Zn(2+)</name>
        <dbReference type="ChEBI" id="CHEBI:29105"/>
    </ligand>
</feature>
<feature type="binding site" evidence="1">
    <location>
        <position position="198"/>
    </location>
    <ligand>
        <name>Zn(2+)</name>
        <dbReference type="ChEBI" id="CHEBI:29105"/>
    </ligand>
</feature>
<feature type="binding site" evidence="1">
    <location>
        <position position="201"/>
    </location>
    <ligand>
        <name>Zn(2+)</name>
        <dbReference type="ChEBI" id="CHEBI:29105"/>
    </ligand>
</feature>
<organism>
    <name type="scientific">Mycoplasma mycoides subsp. mycoides SC (strain CCUG 32753 / NCTC 10114 / PG1)</name>
    <dbReference type="NCBI Taxonomy" id="272632"/>
    <lineage>
        <taxon>Bacteria</taxon>
        <taxon>Bacillati</taxon>
        <taxon>Mycoplasmatota</taxon>
        <taxon>Mollicutes</taxon>
        <taxon>Mycoplasmataceae</taxon>
        <taxon>Mycoplasma</taxon>
    </lineage>
</organism>
<protein>
    <recommendedName>
        <fullName evidence="1">Thymidine kinase</fullName>
        <ecNumber evidence="1">2.7.1.21</ecNumber>
    </recommendedName>
</protein>
<proteinExistence type="inferred from homology"/>
<accession>Q8VVL0</accession>
<sequence length="209" mass="23943">MTELDINEIEAYNSNKMGWIELITGCMFAGKTEEFIRRLRVLSYAKKRVLAFKPSIDNRYSVENIISHSGSKLDSYLVHSSDEIKQIIEKENQIQQVDVIGIDEVQFFDEQVVELIEQLANQGIIVIVNGLDKDFRCLPFKNVDKLLVTAEFVTKLRARCHLCGNFANRSQKIVNGQPALWDSPLILVDGKESYEARCRNCFIVPKKEV</sequence>
<comment type="catalytic activity">
    <reaction evidence="1">
        <text>thymidine + ATP = dTMP + ADP + H(+)</text>
        <dbReference type="Rhea" id="RHEA:19129"/>
        <dbReference type="ChEBI" id="CHEBI:15378"/>
        <dbReference type="ChEBI" id="CHEBI:17748"/>
        <dbReference type="ChEBI" id="CHEBI:30616"/>
        <dbReference type="ChEBI" id="CHEBI:63528"/>
        <dbReference type="ChEBI" id="CHEBI:456216"/>
        <dbReference type="EC" id="2.7.1.21"/>
    </reaction>
</comment>
<comment type="subunit">
    <text evidence="1">Homotetramer.</text>
</comment>
<comment type="subcellular location">
    <subcellularLocation>
        <location evidence="1">Cytoplasm</location>
    </subcellularLocation>
</comment>
<comment type="similarity">
    <text evidence="1">Belongs to the thymidine kinase family.</text>
</comment>
<gene>
    <name evidence="1" type="primary">tdk</name>
    <name type="ordered locus">MSC_0149</name>
</gene>
<reference key="1">
    <citation type="submission" date="2001-05" db="EMBL/GenBank/DDBJ databases">
        <authorList>
            <person name="Carnrot C."/>
            <person name="Eriksson S."/>
            <person name="Wang L."/>
        </authorList>
    </citation>
    <scope>NUCLEOTIDE SEQUENCE [GENOMIC DNA]</scope>
    <source>
        <strain>CCUG 32753 / NCTC 10114 / PG1</strain>
    </source>
</reference>
<reference key="2">
    <citation type="journal article" date="2004" name="Genome Res.">
        <title>The genome sequence of Mycoplasma mycoides subsp. mycoides SC type strain PG1T, the causative agent of contagious bovine pleuropneumonia (CBPP).</title>
        <authorList>
            <person name="Westberg J."/>
            <person name="Persson A."/>
            <person name="Holmberg A."/>
            <person name="Goesmann A."/>
            <person name="Lundeberg J."/>
            <person name="Johansson K.-E."/>
            <person name="Pettersson B."/>
            <person name="Uhlen M."/>
        </authorList>
    </citation>
    <scope>NUCLEOTIDE SEQUENCE [LARGE SCALE GENOMIC DNA]</scope>
    <source>
        <strain>CCUG 32753 / NCTC 10114 / PG1</strain>
    </source>
</reference>